<proteinExistence type="evidence at transcript level"/>
<keyword id="KW-1185">Reference proteome</keyword>
<keyword id="KW-0677">Repeat</keyword>
<keyword id="KW-0732">Signal</keyword>
<protein>
    <recommendedName>
        <fullName>Chorion class CB protein M5H4</fullName>
    </recommendedName>
</protein>
<comment type="function">
    <text>This protein is one of many from the eggshell of the silk moth.</text>
</comment>
<comment type="similarity">
    <text evidence="1">Belongs to the chorion protein family.</text>
</comment>
<accession>P08830</accession>
<feature type="signal peptide">
    <location>
        <begin position="1"/>
        <end position="20"/>
    </location>
</feature>
<feature type="chain" id="PRO_0000005387" description="Chorion class CB protein M5H4">
    <location>
        <begin position="21"/>
        <end position="174"/>
    </location>
</feature>
<feature type="region of interest" description="Left arm">
    <location>
        <begin position="21"/>
        <end position="71"/>
    </location>
</feature>
<feature type="region of interest" description="Central domain">
    <location>
        <begin position="72"/>
        <end position="142"/>
    </location>
</feature>
<feature type="region of interest" description="Right arm">
    <location>
        <begin position="143"/>
        <end position="174"/>
    </location>
</feature>
<feature type="sequence conflict" description="In Ref. 2; AAA27829." evidence="1" ref="2">
    <original>A</original>
    <variation>V</variation>
    <location>
        <position position="115"/>
    </location>
</feature>
<reference key="1">
    <citation type="journal article" date="1988" name="Dev. Biol.">
        <title>Organization and expression of three genes from the silkmoth early chorion locus.</title>
        <authorList>
            <person name="Hibner B.L."/>
            <person name="Burke W.D."/>
            <person name="Lecanidou R."/>
            <person name="Rodakis G.C."/>
            <person name="Eickbush T.H."/>
        </authorList>
    </citation>
    <scope>NUCLEOTIDE SEQUENCE [GENOMIC DNA]</scope>
</reference>
<reference key="2">
    <citation type="journal article" date="1986" name="Proc. Natl. Acad. Sci. U.S.A.">
        <title>Evolution of the silk moth chorion gene superfamily: gene families CA and CB.</title>
        <authorList>
            <person name="Lecanidou R."/>
            <person name="Rodakis G.C."/>
            <person name="Eickbush T.H."/>
            <person name="Kafatos F.C."/>
        </authorList>
    </citation>
    <scope>NUCLEOTIDE SEQUENCE [MRNA] OF 6-174</scope>
</reference>
<sequence length="174" mass="17000">MTTIVVLICASALFVQLAFSQCLGRDPVIGFGGAYGSGWGGYDAISPYDGLGYGVPYSAGFIGLSPSNLAASCGGALAVNSLSPTTPTGLTVASENTIEGNLGIFGQLPFLGAVATDGAFSTGGIGAVLYGCGDGAIGIVSEAPIVAPASIGYGQWPVNAGYKGIGPCGCGGLY</sequence>
<name>CHCB1_BOMMO</name>
<organism>
    <name type="scientific">Bombyx mori</name>
    <name type="common">Silk moth</name>
    <dbReference type="NCBI Taxonomy" id="7091"/>
    <lineage>
        <taxon>Eukaryota</taxon>
        <taxon>Metazoa</taxon>
        <taxon>Ecdysozoa</taxon>
        <taxon>Arthropoda</taxon>
        <taxon>Hexapoda</taxon>
        <taxon>Insecta</taxon>
        <taxon>Pterygota</taxon>
        <taxon>Neoptera</taxon>
        <taxon>Endopterygota</taxon>
        <taxon>Lepidoptera</taxon>
        <taxon>Glossata</taxon>
        <taxon>Ditrysia</taxon>
        <taxon>Bombycoidea</taxon>
        <taxon>Bombycidae</taxon>
        <taxon>Bombycinae</taxon>
        <taxon>Bombyx</taxon>
    </lineage>
</organism>
<evidence type="ECO:0000305" key="1"/>
<dbReference type="EMBL" id="M19075">
    <property type="protein sequence ID" value="AAA27830.1"/>
    <property type="molecule type" value="Genomic_DNA"/>
</dbReference>
<dbReference type="EMBL" id="M13835">
    <property type="protein sequence ID" value="AAA27829.1"/>
    <property type="molecule type" value="mRNA"/>
</dbReference>
<dbReference type="PIR" id="A45937">
    <property type="entry name" value="A45937"/>
</dbReference>
<dbReference type="PIR" id="B23548">
    <property type="entry name" value="B23548"/>
</dbReference>
<dbReference type="PaxDb" id="7091-BGIBMGA009722-TA"/>
<dbReference type="eggNOG" id="ENOG502TC4H">
    <property type="taxonomic scope" value="Eukaryota"/>
</dbReference>
<dbReference type="HOGENOM" id="CLU_087723_1_1_1"/>
<dbReference type="InParanoid" id="P08830"/>
<dbReference type="Proteomes" id="UP000005204">
    <property type="component" value="Unassembled WGS sequence"/>
</dbReference>
<dbReference type="GO" id="GO:0042600">
    <property type="term" value="C:egg chorion"/>
    <property type="evidence" value="ECO:0007669"/>
    <property type="project" value="InterPro"/>
</dbReference>
<dbReference type="GO" id="GO:0005213">
    <property type="term" value="F:structural constituent of egg chorion"/>
    <property type="evidence" value="ECO:0007669"/>
    <property type="project" value="InterPro"/>
</dbReference>
<dbReference type="GO" id="GO:0007304">
    <property type="term" value="P:chorion-containing eggshell formation"/>
    <property type="evidence" value="ECO:0007669"/>
    <property type="project" value="InterPro"/>
</dbReference>
<dbReference type="InterPro" id="IPR002635">
    <property type="entry name" value="Chorion"/>
</dbReference>
<dbReference type="Pfam" id="PF01723">
    <property type="entry name" value="Chorion_1"/>
    <property type="match status" value="1"/>
</dbReference>